<dbReference type="EC" id="3.6.4.13"/>
<dbReference type="EMBL" id="AAFW02000135">
    <property type="protein sequence ID" value="EDN61025.1"/>
    <property type="molecule type" value="Genomic_DNA"/>
</dbReference>
<dbReference type="SMR" id="A6ZWD3"/>
<dbReference type="HOGENOM" id="CLU_003041_16_3_1"/>
<dbReference type="Proteomes" id="UP000007060">
    <property type="component" value="Unassembled WGS sequence"/>
</dbReference>
<dbReference type="GO" id="GO:0005737">
    <property type="term" value="C:cytoplasm"/>
    <property type="evidence" value="ECO:0007669"/>
    <property type="project" value="UniProtKB-SubCell"/>
</dbReference>
<dbReference type="GO" id="GO:0005524">
    <property type="term" value="F:ATP binding"/>
    <property type="evidence" value="ECO:0007669"/>
    <property type="project" value="UniProtKB-KW"/>
</dbReference>
<dbReference type="GO" id="GO:0016887">
    <property type="term" value="F:ATP hydrolysis activity"/>
    <property type="evidence" value="ECO:0007669"/>
    <property type="project" value="RHEA"/>
</dbReference>
<dbReference type="GO" id="GO:0003723">
    <property type="term" value="F:RNA binding"/>
    <property type="evidence" value="ECO:0007669"/>
    <property type="project" value="UniProtKB-KW"/>
</dbReference>
<dbReference type="GO" id="GO:0003724">
    <property type="term" value="F:RNA helicase activity"/>
    <property type="evidence" value="ECO:0007669"/>
    <property type="project" value="UniProtKB-EC"/>
</dbReference>
<dbReference type="GO" id="GO:0003743">
    <property type="term" value="F:translation initiation factor activity"/>
    <property type="evidence" value="ECO:0007669"/>
    <property type="project" value="UniProtKB-KW"/>
</dbReference>
<dbReference type="CDD" id="cd17967">
    <property type="entry name" value="DEADc_DDX3_DDX4"/>
    <property type="match status" value="1"/>
</dbReference>
<dbReference type="CDD" id="cd18787">
    <property type="entry name" value="SF2_C_DEAD"/>
    <property type="match status" value="1"/>
</dbReference>
<dbReference type="FunFam" id="3.40.50.300:FF:000160">
    <property type="entry name" value="ATP-dependent RNA helicase DDX3X"/>
    <property type="match status" value="1"/>
</dbReference>
<dbReference type="FunFam" id="3.40.50.300:FF:000008">
    <property type="entry name" value="ATP-dependent RNA helicase RhlB"/>
    <property type="match status" value="1"/>
</dbReference>
<dbReference type="Gene3D" id="3.40.50.300">
    <property type="entry name" value="P-loop containing nucleotide triphosphate hydrolases"/>
    <property type="match status" value="2"/>
</dbReference>
<dbReference type="InterPro" id="IPR011545">
    <property type="entry name" value="DEAD/DEAH_box_helicase_dom"/>
</dbReference>
<dbReference type="InterPro" id="IPR044763">
    <property type="entry name" value="Ded1/Dbp1_DEADc"/>
</dbReference>
<dbReference type="InterPro" id="IPR014001">
    <property type="entry name" value="Helicase_ATP-bd"/>
</dbReference>
<dbReference type="InterPro" id="IPR001650">
    <property type="entry name" value="Helicase_C-like"/>
</dbReference>
<dbReference type="InterPro" id="IPR027417">
    <property type="entry name" value="P-loop_NTPase"/>
</dbReference>
<dbReference type="InterPro" id="IPR000629">
    <property type="entry name" value="RNA-helicase_DEAD-box_CS"/>
</dbReference>
<dbReference type="InterPro" id="IPR014014">
    <property type="entry name" value="RNA_helicase_DEAD_Q_motif"/>
</dbReference>
<dbReference type="PANTHER" id="PTHR47958">
    <property type="entry name" value="ATP-DEPENDENT RNA HELICASE DBP3"/>
    <property type="match status" value="1"/>
</dbReference>
<dbReference type="Pfam" id="PF00270">
    <property type="entry name" value="DEAD"/>
    <property type="match status" value="1"/>
</dbReference>
<dbReference type="Pfam" id="PF00271">
    <property type="entry name" value="Helicase_C"/>
    <property type="match status" value="1"/>
</dbReference>
<dbReference type="SMART" id="SM00487">
    <property type="entry name" value="DEXDc"/>
    <property type="match status" value="1"/>
</dbReference>
<dbReference type="SMART" id="SM00490">
    <property type="entry name" value="HELICc"/>
    <property type="match status" value="1"/>
</dbReference>
<dbReference type="SUPFAM" id="SSF52540">
    <property type="entry name" value="P-loop containing nucleoside triphosphate hydrolases"/>
    <property type="match status" value="1"/>
</dbReference>
<dbReference type="PROSITE" id="PS00039">
    <property type="entry name" value="DEAD_ATP_HELICASE"/>
    <property type="match status" value="1"/>
</dbReference>
<dbReference type="PROSITE" id="PS51192">
    <property type="entry name" value="HELICASE_ATP_BIND_1"/>
    <property type="match status" value="1"/>
</dbReference>
<dbReference type="PROSITE" id="PS51194">
    <property type="entry name" value="HELICASE_CTER"/>
    <property type="match status" value="1"/>
</dbReference>
<dbReference type="PROSITE" id="PS51195">
    <property type="entry name" value="Q_MOTIF"/>
    <property type="match status" value="1"/>
</dbReference>
<proteinExistence type="inferred from homology"/>
<gene>
    <name type="primary">DBP1</name>
    <name type="ORF">SCY_5610</name>
</gene>
<sequence length="617" mass="67990">MADLPQKVSNLSINNKENGGDGGKSSYVPPHLRSRGKPSFERSTPKQEDKVTGGDFFRRAGRQTGNNGGFFGFSKERNGGTSANYNRGGSSNYKSSGNRWVNGKHIPGPKNAKLEAELFGVHEDPDYHSSGIKFDNYDDIPVDASGKDVPEPILDFSSPPLDELLMENIKLASFTKPTPVQKYSIPIVTKGRDLMACAQTGSGKTGGFLFPLFTELFRSGPSPVPEKAQSFYSRKGYPSALVLAPTRELATQIFEEARKFTYRSWVRPCVVYGGAPIGNQMREVDRGCDLLVATPGRLNDLLERGKVSLANIKYLVLDEADRMLDMGFEPQIRHIVEECDMPSVENRQTLMFSATFPVDIQHLARDFLDNYIFLSVGRVGSTSENITQRILYVDDMDKKSALLDLLSAEHKGLTLIFVETKRMADQLTDFLIMQNFKATAIHGDRTQAERERALSAFKANVADILVATAVAARGLDIPNVTHVINYDLPSDIDDYVHRIGRTGRAGNTGVATSFFNSNNQNIVKGLMEILNEANQEVPTFLSDLSRQNSRGGRTRGGGGFFNSRNNGSRDYRKHGGNGSFGSTRPRNTGTSNWGSIGGGFRNDNEKNGYGNSNASWW</sequence>
<feature type="chain" id="PRO_0000310185" description="ATP-dependent RNA helicase DBP1">
    <location>
        <begin position="1"/>
        <end position="617"/>
    </location>
</feature>
<feature type="domain" description="Helicase ATP-binding" evidence="2">
    <location>
        <begin position="185"/>
        <end position="374"/>
    </location>
</feature>
<feature type="domain" description="Helicase C-terminal" evidence="3">
    <location>
        <begin position="385"/>
        <end position="545"/>
    </location>
</feature>
<feature type="region of interest" description="Disordered" evidence="4">
    <location>
        <begin position="1"/>
        <end position="90"/>
    </location>
</feature>
<feature type="region of interest" description="Disordered" evidence="4">
    <location>
        <begin position="542"/>
        <end position="617"/>
    </location>
</feature>
<feature type="short sequence motif" description="Q motif">
    <location>
        <begin position="154"/>
        <end position="182"/>
    </location>
</feature>
<feature type="short sequence motif" description="DEAD box">
    <location>
        <begin position="318"/>
        <end position="321"/>
    </location>
</feature>
<feature type="compositionally biased region" description="Polar residues" evidence="4">
    <location>
        <begin position="7"/>
        <end position="17"/>
    </location>
</feature>
<feature type="compositionally biased region" description="Basic and acidic residues" evidence="4">
    <location>
        <begin position="38"/>
        <end position="58"/>
    </location>
</feature>
<feature type="compositionally biased region" description="Polar residues" evidence="4">
    <location>
        <begin position="79"/>
        <end position="90"/>
    </location>
</feature>
<feature type="compositionally biased region" description="Polar residues" evidence="4">
    <location>
        <begin position="580"/>
        <end position="594"/>
    </location>
</feature>
<feature type="binding site" evidence="2">
    <location>
        <begin position="198"/>
        <end position="205"/>
    </location>
    <ligand>
        <name>ATP</name>
        <dbReference type="ChEBI" id="CHEBI:30616"/>
    </ligand>
</feature>
<organism>
    <name type="scientific">Saccharomyces cerevisiae (strain YJM789)</name>
    <name type="common">Baker's yeast</name>
    <dbReference type="NCBI Taxonomy" id="307796"/>
    <lineage>
        <taxon>Eukaryota</taxon>
        <taxon>Fungi</taxon>
        <taxon>Dikarya</taxon>
        <taxon>Ascomycota</taxon>
        <taxon>Saccharomycotina</taxon>
        <taxon>Saccharomycetes</taxon>
        <taxon>Saccharomycetales</taxon>
        <taxon>Saccharomycetaceae</taxon>
        <taxon>Saccharomyces</taxon>
    </lineage>
</organism>
<name>DBP1_YEAS7</name>
<comment type="function">
    <text evidence="1">ATP-binding RNA helicase involved in translation initiation. Remodels RNA in response to ADP and ATP concentrations by facilitating disruption, but also formation of RNA duplexes (By similarity). Redundant to DED1, may be required in conditions in which DED1 expression is decreased (By similarity).</text>
</comment>
<comment type="catalytic activity">
    <reaction>
        <text>ATP + H2O = ADP + phosphate + H(+)</text>
        <dbReference type="Rhea" id="RHEA:13065"/>
        <dbReference type="ChEBI" id="CHEBI:15377"/>
        <dbReference type="ChEBI" id="CHEBI:15378"/>
        <dbReference type="ChEBI" id="CHEBI:30616"/>
        <dbReference type="ChEBI" id="CHEBI:43474"/>
        <dbReference type="ChEBI" id="CHEBI:456216"/>
        <dbReference type="EC" id="3.6.4.13"/>
    </reaction>
</comment>
<comment type="subcellular location">
    <subcellularLocation>
        <location evidence="1">Cytoplasm</location>
    </subcellularLocation>
</comment>
<comment type="domain">
    <text>The Q motif is unique to and characteristic of the DEAD box family of RNA helicases and controls ATP binding and hydrolysis.</text>
</comment>
<comment type="similarity">
    <text evidence="5">Belongs to the DEAD box helicase family. DDX3/DED1 subfamily.</text>
</comment>
<accession>A6ZWD3</accession>
<keyword id="KW-0067">ATP-binding</keyword>
<keyword id="KW-0963">Cytoplasm</keyword>
<keyword id="KW-0347">Helicase</keyword>
<keyword id="KW-0378">Hydrolase</keyword>
<keyword id="KW-0396">Initiation factor</keyword>
<keyword id="KW-0547">Nucleotide-binding</keyword>
<keyword id="KW-0648">Protein biosynthesis</keyword>
<keyword id="KW-0694">RNA-binding</keyword>
<reference key="1">
    <citation type="journal article" date="2007" name="Proc. Natl. Acad. Sci. U.S.A.">
        <title>Genome sequencing and comparative analysis of Saccharomyces cerevisiae strain YJM789.</title>
        <authorList>
            <person name="Wei W."/>
            <person name="McCusker J.H."/>
            <person name="Hyman R.W."/>
            <person name="Jones T."/>
            <person name="Ning Y."/>
            <person name="Cao Z."/>
            <person name="Gu Z."/>
            <person name="Bruno D."/>
            <person name="Miranda M."/>
            <person name="Nguyen M."/>
            <person name="Wilhelmy J."/>
            <person name="Komp C."/>
            <person name="Tamse R."/>
            <person name="Wang X."/>
            <person name="Jia P."/>
            <person name="Luedi P."/>
            <person name="Oefner P.J."/>
            <person name="David L."/>
            <person name="Dietrich F.S."/>
            <person name="Li Y."/>
            <person name="Davis R.W."/>
            <person name="Steinmetz L.M."/>
        </authorList>
    </citation>
    <scope>NUCLEOTIDE SEQUENCE [LARGE SCALE GENOMIC DNA]</scope>
    <source>
        <strain>YJM789</strain>
    </source>
</reference>
<protein>
    <recommendedName>
        <fullName>ATP-dependent RNA helicase DBP1</fullName>
        <ecNumber>3.6.4.13</ecNumber>
    </recommendedName>
    <alternativeName>
        <fullName>DEAD box protein 1</fullName>
    </alternativeName>
    <alternativeName>
        <fullName>Helicase CA1</fullName>
    </alternativeName>
</protein>
<evidence type="ECO:0000250" key="1"/>
<evidence type="ECO:0000255" key="2">
    <source>
        <dbReference type="PROSITE-ProRule" id="PRU00541"/>
    </source>
</evidence>
<evidence type="ECO:0000255" key="3">
    <source>
        <dbReference type="PROSITE-ProRule" id="PRU00542"/>
    </source>
</evidence>
<evidence type="ECO:0000256" key="4">
    <source>
        <dbReference type="SAM" id="MobiDB-lite"/>
    </source>
</evidence>
<evidence type="ECO:0000305" key="5"/>